<dbReference type="EMBL" id="M95738">
    <property type="protein sequence ID" value="AAA41183.1"/>
    <property type="molecule type" value="mRNA"/>
</dbReference>
<dbReference type="EMBL" id="M95763">
    <property type="protein sequence ID" value="AAA40607.1"/>
    <property type="molecule type" value="mRNA"/>
</dbReference>
<dbReference type="EMBL" id="S42358">
    <property type="protein sequence ID" value="AAB22850.1"/>
    <property type="molecule type" value="mRNA"/>
</dbReference>
<dbReference type="PIR" id="JH0695">
    <property type="entry name" value="JH0695"/>
</dbReference>
<dbReference type="RefSeq" id="NP_077348.1">
    <property type="nucleotide sequence ID" value="NM_024372.2"/>
</dbReference>
<dbReference type="SMR" id="P31647"/>
<dbReference type="BioGRID" id="249422">
    <property type="interactions" value="2"/>
</dbReference>
<dbReference type="FunCoup" id="P31647">
    <property type="interactions" value="247"/>
</dbReference>
<dbReference type="IntAct" id="P31647">
    <property type="interactions" value="1"/>
</dbReference>
<dbReference type="MINT" id="P31647"/>
<dbReference type="STRING" id="10116.ENSRNOP00000008342"/>
<dbReference type="BindingDB" id="P31647"/>
<dbReference type="ChEMBL" id="CHEMBL2111478"/>
<dbReference type="GlyCosmos" id="P31647">
    <property type="glycosylation" value="3 sites, No reported glycans"/>
</dbReference>
<dbReference type="GlyGen" id="P31647">
    <property type="glycosylation" value="3 sites"/>
</dbReference>
<dbReference type="iPTMnet" id="P31647"/>
<dbReference type="PhosphoSitePlus" id="P31647"/>
<dbReference type="SwissPalm" id="P31647"/>
<dbReference type="PaxDb" id="10116-ENSRNOP00000008342"/>
<dbReference type="Ensembl" id="ENSRNOT00000008342.6">
    <property type="protein sequence ID" value="ENSRNOP00000008342.3"/>
    <property type="gene ID" value="ENSRNOG00000005697.6"/>
</dbReference>
<dbReference type="GeneID" id="79213"/>
<dbReference type="KEGG" id="rno:79213"/>
<dbReference type="UCSC" id="RGD:628737">
    <property type="organism name" value="rat"/>
</dbReference>
<dbReference type="AGR" id="RGD:628737"/>
<dbReference type="CTD" id="6538"/>
<dbReference type="RGD" id="628737">
    <property type="gene designation" value="Slc6a11"/>
</dbReference>
<dbReference type="eggNOG" id="KOG3660">
    <property type="taxonomic scope" value="Eukaryota"/>
</dbReference>
<dbReference type="GeneTree" id="ENSGT00940000157569"/>
<dbReference type="HOGENOM" id="CLU_006855_9_5_1"/>
<dbReference type="InParanoid" id="P31647"/>
<dbReference type="OMA" id="KRWKYAG"/>
<dbReference type="OrthoDB" id="6581954at2759"/>
<dbReference type="PhylomeDB" id="P31647"/>
<dbReference type="TreeFam" id="TF343812"/>
<dbReference type="Reactome" id="R-RNO-442660">
    <property type="pathway name" value="Na+/Cl- dependent neurotransmitter transporters"/>
</dbReference>
<dbReference type="Reactome" id="R-RNO-71288">
    <property type="pathway name" value="Creatine metabolism"/>
</dbReference>
<dbReference type="Reactome" id="R-RNO-888593">
    <property type="pathway name" value="Reuptake of GABA"/>
</dbReference>
<dbReference type="PRO" id="PR:P31647"/>
<dbReference type="Proteomes" id="UP000002494">
    <property type="component" value="Chromosome 4"/>
</dbReference>
<dbReference type="Bgee" id="ENSRNOG00000005697">
    <property type="expression patterns" value="Expressed in frontal cortex and 6 other cell types or tissues"/>
</dbReference>
<dbReference type="GO" id="GO:0042995">
    <property type="term" value="C:cell projection"/>
    <property type="evidence" value="ECO:0000314"/>
    <property type="project" value="RGD"/>
</dbReference>
<dbReference type="GO" id="GO:0098982">
    <property type="term" value="C:GABA-ergic synapse"/>
    <property type="evidence" value="ECO:0000314"/>
    <property type="project" value="SynGO"/>
</dbReference>
<dbReference type="GO" id="GO:0005886">
    <property type="term" value="C:plasma membrane"/>
    <property type="evidence" value="ECO:0000314"/>
    <property type="project" value="UniProtKB"/>
</dbReference>
<dbReference type="GO" id="GO:0045211">
    <property type="term" value="C:postsynaptic membrane"/>
    <property type="evidence" value="ECO:0000314"/>
    <property type="project" value="SynGO"/>
</dbReference>
<dbReference type="GO" id="GO:0042734">
    <property type="term" value="C:presynaptic membrane"/>
    <property type="evidence" value="ECO:0000314"/>
    <property type="project" value="SynGO"/>
</dbReference>
<dbReference type="GO" id="GO:0045202">
    <property type="term" value="C:synapse"/>
    <property type="evidence" value="ECO:0000266"/>
    <property type="project" value="RGD"/>
</dbReference>
<dbReference type="GO" id="GO:0016597">
    <property type="term" value="F:amino acid binding"/>
    <property type="evidence" value="ECO:0000314"/>
    <property type="project" value="RGD"/>
</dbReference>
<dbReference type="GO" id="GO:0005283">
    <property type="term" value="F:amino acid:sodium symporter activity"/>
    <property type="evidence" value="ECO:0000266"/>
    <property type="project" value="RGD"/>
</dbReference>
<dbReference type="GO" id="GO:0005332">
    <property type="term" value="F:gamma-aminobutyric acid:sodium:chloride symporter activity"/>
    <property type="evidence" value="ECO:0000314"/>
    <property type="project" value="UniProtKB"/>
</dbReference>
<dbReference type="GO" id="GO:0008028">
    <property type="term" value="F:monocarboxylic acid transmembrane transporter activity"/>
    <property type="evidence" value="ECO:0000266"/>
    <property type="project" value="RGD"/>
</dbReference>
<dbReference type="GO" id="GO:0005369">
    <property type="term" value="F:taurine:sodium symporter activity"/>
    <property type="evidence" value="ECO:0000266"/>
    <property type="project" value="RGD"/>
</dbReference>
<dbReference type="GO" id="GO:0006865">
    <property type="term" value="P:amino acid transport"/>
    <property type="evidence" value="ECO:0000318"/>
    <property type="project" value="GO_Central"/>
</dbReference>
<dbReference type="GO" id="GO:0015718">
    <property type="term" value="P:monocarboxylic acid transport"/>
    <property type="evidence" value="ECO:0000266"/>
    <property type="project" value="RGD"/>
</dbReference>
<dbReference type="GO" id="GO:0006836">
    <property type="term" value="P:neurotransmitter transport"/>
    <property type="evidence" value="ECO:0000314"/>
    <property type="project" value="RGD"/>
</dbReference>
<dbReference type="GO" id="GO:0001504">
    <property type="term" value="P:neurotransmitter uptake"/>
    <property type="evidence" value="ECO:0000266"/>
    <property type="project" value="RGD"/>
</dbReference>
<dbReference type="GO" id="GO:0009410">
    <property type="term" value="P:response to xenobiotic stimulus"/>
    <property type="evidence" value="ECO:0000270"/>
    <property type="project" value="RGD"/>
</dbReference>
<dbReference type="GO" id="GO:0035725">
    <property type="term" value="P:sodium ion transmembrane transport"/>
    <property type="evidence" value="ECO:0000318"/>
    <property type="project" value="GO_Central"/>
</dbReference>
<dbReference type="CDD" id="cd11508">
    <property type="entry name" value="SLC6sbd_GAT3"/>
    <property type="match status" value="1"/>
</dbReference>
<dbReference type="InterPro" id="IPR000175">
    <property type="entry name" value="Na/ntran_symport"/>
</dbReference>
<dbReference type="InterPro" id="IPR002982">
    <property type="entry name" value="Na/ntran_symport_GABA_GAT3"/>
</dbReference>
<dbReference type="InterPro" id="IPR037272">
    <property type="entry name" value="SNS_sf"/>
</dbReference>
<dbReference type="PANTHER" id="PTHR11616:SF124">
    <property type="entry name" value="SODIUM- AND CHLORIDE-DEPENDENT GABA TRANSPORTER 3"/>
    <property type="match status" value="1"/>
</dbReference>
<dbReference type="PANTHER" id="PTHR11616">
    <property type="entry name" value="SODIUM/CHLORIDE DEPENDENT TRANSPORTER"/>
    <property type="match status" value="1"/>
</dbReference>
<dbReference type="Pfam" id="PF00209">
    <property type="entry name" value="SNF"/>
    <property type="match status" value="1"/>
</dbReference>
<dbReference type="PRINTS" id="PR01197">
    <property type="entry name" value="GAT3TRNSPORT"/>
</dbReference>
<dbReference type="PRINTS" id="PR00176">
    <property type="entry name" value="NANEUSMPORT"/>
</dbReference>
<dbReference type="SUPFAM" id="SSF161070">
    <property type="entry name" value="SNF-like"/>
    <property type="match status" value="1"/>
</dbReference>
<dbReference type="PROSITE" id="PS00610">
    <property type="entry name" value="NA_NEUROTRAN_SYMP_1"/>
    <property type="match status" value="1"/>
</dbReference>
<dbReference type="PROSITE" id="PS00754">
    <property type="entry name" value="NA_NEUROTRAN_SYMP_2"/>
    <property type="match status" value="1"/>
</dbReference>
<dbReference type="PROSITE" id="PS50267">
    <property type="entry name" value="NA_NEUROTRAN_SYMP_3"/>
    <property type="match status" value="1"/>
</dbReference>
<sequence>MTAEQALPLGNGKAAEEARGSEALGGGGGGAAGTREARDKAVHERGHWNNKVEFVLSVAGEIIGLGNVWRFPYLCYKNGGGAFLIPYVVFFICCGIPVFFLETALGQFTSEGGITCWRRVCPLFEGIGYATQVIEAHLNVYYIIILAWAIFYLSNCFTTELPWATCGHEWNTEKCVEFQKLNFSNYSHVSLQNATSPVMEFWERRVLAISDGIEHIGNLRWELALCLLAAWTICYFCIWKGTKSTGKVVYVTATFPYIMLLILLIRGVTLPGASEGIKFYLYPDLSRLSDPQVWVDAGTQIFFSYAICLGCLTALGSYNNYNNNCYRDCIMLCCLNSGTSFVAGFAIFSVLGFMAYEQGVPIAEVAESGPGLAFIAYPKAVTMMPLSPLWATLFFMMLIFLGLDSQFVCVESLVTAVVDMYPKVFRRGYRRELLILALSIVSYFLGLVMLTEGGMYIFQLFDSYAASGMCLLFVAIFECVCIGWVYGSNRFYDNIEDMIGYRPLSLIKWCWKVVTPGICAGIFIFFLVKYKPLKYNNVYTYPAWGYGIGWLMALSSMLCIPLWIFIKLWKTEGTLPEKLQKLTVPSADLKMRGKLGASPRMVTVNDCEAKVKGDGTISAITEKETHF</sequence>
<organism>
    <name type="scientific">Rattus norvegicus</name>
    <name type="common">Rat</name>
    <dbReference type="NCBI Taxonomy" id="10116"/>
    <lineage>
        <taxon>Eukaryota</taxon>
        <taxon>Metazoa</taxon>
        <taxon>Chordata</taxon>
        <taxon>Craniata</taxon>
        <taxon>Vertebrata</taxon>
        <taxon>Euteleostomi</taxon>
        <taxon>Mammalia</taxon>
        <taxon>Eutheria</taxon>
        <taxon>Euarchontoglires</taxon>
        <taxon>Glires</taxon>
        <taxon>Rodentia</taxon>
        <taxon>Myomorpha</taxon>
        <taxon>Muroidea</taxon>
        <taxon>Muridae</taxon>
        <taxon>Murinae</taxon>
        <taxon>Rattus</taxon>
    </lineage>
</organism>
<gene>
    <name type="primary">Slc6a11</name>
    <name type="synonym">Gabt3</name>
    <name type="synonym">Gat-3</name>
    <name type="synonym">Gat-b</name>
</gene>
<proteinExistence type="evidence at protein level"/>
<reference key="1">
    <citation type="journal article" date="1992" name="J. Biol. Chem.">
        <title>Molecular heterogeneity of the gamma-aminobutyric acid (GABA) transport system. Cloning of two novel high affinity GABA transporters from rat brain.</title>
        <authorList>
            <person name="Borden L.A."/>
            <person name="Smith K.E."/>
            <person name="Hartig P.R."/>
            <person name="Branchek T.A."/>
            <person name="Weinshank R.L."/>
        </authorList>
    </citation>
    <scope>NUCLEOTIDE SEQUENCE [MRNA]</scope>
    <scope>FUNCTION</scope>
    <scope>TRANSPORTER ACTIVITY</scope>
    <scope>ACTIVITY REGULATION</scope>
    <scope>BIOPHYSICOCHEMICAL PROPERTIES</scope>
    <scope>TISSUE SPECIFICITY</scope>
    <source>
        <strain>Sprague-Dawley</strain>
        <tissue>Brain</tissue>
    </source>
</reference>
<reference key="2">
    <citation type="journal article" date="1992" name="Neuron">
        <title>Functional expression and CNS distribution of a beta-alanine-sensitive neuronal GABA transporter.</title>
        <authorList>
            <person name="Clark J.A."/>
            <person name="Deutch A.Y."/>
            <person name="Gallipoli P.Z."/>
            <person name="Amara S.G."/>
        </authorList>
    </citation>
    <scope>NUCLEOTIDE SEQUENCE [MRNA]</scope>
    <scope>FUNCTION</scope>
    <scope>TRANSPORTER ACTIVITY</scope>
    <scope>ACTIVITY REGULATION</scope>
    <scope>BIOPHYSICOCHEMICAL PROPERTIES</scope>
    <scope>TISSUE SPECIFICITY</scope>
</reference>
<reference key="3">
    <citation type="journal article" date="1996" name="J. Comp. Neurol.">
        <title>GABA plasma membrane transporters, GAT-1 and GAT-3, display different distributions in the rat hippocampus.</title>
        <authorList>
            <person name="Ribak C.E."/>
            <person name="Tong W.M."/>
            <person name="Brecha N.C."/>
        </authorList>
    </citation>
    <scope>SUBCELLULAR LOCATION</scope>
    <scope>TISSUE SPECIFICITY</scope>
</reference>
<reference key="4">
    <citation type="journal article" date="2012" name="Nat. Commun.">
        <title>Quantitative maps of protein phosphorylation sites across 14 different rat organs and tissues.</title>
        <authorList>
            <person name="Lundby A."/>
            <person name="Secher A."/>
            <person name="Lage K."/>
            <person name="Nordsborg N.B."/>
            <person name="Dmytriyev A."/>
            <person name="Lundby C."/>
            <person name="Olsen J.V."/>
        </authorList>
    </citation>
    <scope>PHOSPHORYLATION [LARGE SCALE ANALYSIS] AT SER-21</scope>
    <scope>IDENTIFICATION BY MASS SPECTROMETRY [LARGE SCALE ANALYSIS]</scope>
</reference>
<keyword id="KW-1003">Cell membrane</keyword>
<keyword id="KW-0325">Glycoprotein</keyword>
<keyword id="KW-0472">Membrane</keyword>
<keyword id="KW-0532">Neurotransmitter transport</keyword>
<keyword id="KW-0597">Phosphoprotein</keyword>
<keyword id="KW-1185">Reference proteome</keyword>
<keyword id="KW-0769">Symport</keyword>
<keyword id="KW-0812">Transmembrane</keyword>
<keyword id="KW-1133">Transmembrane helix</keyword>
<keyword id="KW-0813">Transport</keyword>
<accession>P31647</accession>
<feature type="chain" id="PRO_0000214786" description="Sodium- and chloride-dependent GABA transporter 3">
    <location>
        <begin position="1"/>
        <end position="627"/>
    </location>
</feature>
<feature type="topological domain" description="Cytoplasmic" evidence="2">
    <location>
        <begin position="1"/>
        <end position="53"/>
    </location>
</feature>
<feature type="transmembrane region" description="Helical; Name=1" evidence="2">
    <location>
        <begin position="54"/>
        <end position="74"/>
    </location>
</feature>
<feature type="transmembrane region" description="Helical; Name=2" evidence="2">
    <location>
        <begin position="82"/>
        <end position="101"/>
    </location>
</feature>
<feature type="transmembrane region" description="Helical; Name=3" evidence="2">
    <location>
        <begin position="126"/>
        <end position="146"/>
    </location>
</feature>
<feature type="topological domain" description="Extracellular" evidence="2">
    <location>
        <begin position="147"/>
        <end position="220"/>
    </location>
</feature>
<feature type="transmembrane region" description="Helical; Name=4" evidence="2">
    <location>
        <begin position="221"/>
        <end position="239"/>
    </location>
</feature>
<feature type="transmembrane region" description="Helical; Name=5" evidence="2">
    <location>
        <begin position="248"/>
        <end position="265"/>
    </location>
</feature>
<feature type="transmembrane region" description="Helical; Name=6" evidence="2">
    <location>
        <begin position="301"/>
        <end position="318"/>
    </location>
</feature>
<feature type="transmembrane region" description="Helical; Name=7" evidence="2">
    <location>
        <begin position="330"/>
        <end position="351"/>
    </location>
</feature>
<feature type="transmembrane region" description="Helical; Name=8" evidence="2">
    <location>
        <begin position="384"/>
        <end position="403"/>
    </location>
</feature>
<feature type="transmembrane region" description="Helical; Name=9" evidence="2">
    <location>
        <begin position="433"/>
        <end position="451"/>
    </location>
</feature>
<feature type="transmembrane region" description="Helical; Name=10" evidence="2">
    <location>
        <begin position="468"/>
        <end position="488"/>
    </location>
</feature>
<feature type="transmembrane region" description="Helical; Name=11" evidence="2">
    <location>
        <begin position="509"/>
        <end position="528"/>
    </location>
</feature>
<feature type="transmembrane region" description="Helical; Name=12" evidence="2">
    <location>
        <begin position="548"/>
        <end position="566"/>
    </location>
</feature>
<feature type="topological domain" description="Cytoplasmic" evidence="2">
    <location>
        <begin position="567"/>
        <end position="627"/>
    </location>
</feature>
<feature type="region of interest" description="Disordered" evidence="3">
    <location>
        <begin position="1"/>
        <end position="36"/>
    </location>
</feature>
<feature type="compositionally biased region" description="Gly residues" evidence="3">
    <location>
        <begin position="23"/>
        <end position="32"/>
    </location>
</feature>
<feature type="modified residue" description="Phosphoserine" evidence="9">
    <location>
        <position position="21"/>
    </location>
</feature>
<feature type="glycosylation site" description="N-linked (GlcNAc...) asparagine" evidence="2">
    <location>
        <position position="182"/>
    </location>
</feature>
<feature type="glycosylation site" description="N-linked (GlcNAc...) asparagine" evidence="2">
    <location>
        <position position="185"/>
    </location>
</feature>
<feature type="glycosylation site" description="N-linked (GlcNAc...) asparagine" evidence="2">
    <location>
        <position position="193"/>
    </location>
</feature>
<name>S6A11_RAT</name>
<evidence type="ECO:0000250" key="1">
    <source>
        <dbReference type="UniProtKB" id="P31650"/>
    </source>
</evidence>
<evidence type="ECO:0000255" key="2"/>
<evidence type="ECO:0000256" key="3">
    <source>
        <dbReference type="SAM" id="MobiDB-lite"/>
    </source>
</evidence>
<evidence type="ECO:0000269" key="4">
    <source>
    </source>
</evidence>
<evidence type="ECO:0000269" key="5">
    <source>
    </source>
</evidence>
<evidence type="ECO:0000269" key="6">
    <source>
    </source>
</evidence>
<evidence type="ECO:0000305" key="7"/>
<evidence type="ECO:0000305" key="8">
    <source>
    </source>
</evidence>
<evidence type="ECO:0007744" key="9">
    <source>
    </source>
</evidence>
<protein>
    <recommendedName>
        <fullName>Sodium- and chloride-dependent GABA transporter 3</fullName>
        <shortName>GAT-3</shortName>
    </recommendedName>
    <alternativeName>
        <fullName>Solute carrier family 6 member 11</fullName>
    </alternativeName>
</protein>
<comment type="function">
    <text evidence="1 4 5">Mediates sodium- and chloride-dependent transport of gamma-aminobutyric acid (GABA) (PubMed:1400419, PubMed:1497897). Can also mediate transport of beta-alanine and to a lower extent that of taurine and hypotaurine (By similarity).</text>
</comment>
<comment type="catalytic activity">
    <reaction evidence="4 5">
        <text>4-aminobutanoate(out) + chloride(out) + 2 Na(+)(out) = 4-aminobutanoate(in) + chloride(in) + 2 Na(+)(in)</text>
        <dbReference type="Rhea" id="RHEA:70687"/>
        <dbReference type="ChEBI" id="CHEBI:17996"/>
        <dbReference type="ChEBI" id="CHEBI:29101"/>
        <dbReference type="ChEBI" id="CHEBI:59888"/>
    </reaction>
    <physiologicalReaction direction="left-to-right" evidence="8">
        <dbReference type="Rhea" id="RHEA:70688"/>
    </physiologicalReaction>
</comment>
<comment type="catalytic activity">
    <reaction evidence="1">
        <text>taurine(out) + chloride(out) + 2 Na(+)(out) = taurine(in) + chloride(in) + 2 Na(+)(in)</text>
        <dbReference type="Rhea" id="RHEA:71223"/>
        <dbReference type="ChEBI" id="CHEBI:17996"/>
        <dbReference type="ChEBI" id="CHEBI:29101"/>
        <dbReference type="ChEBI" id="CHEBI:507393"/>
    </reaction>
    <physiologicalReaction direction="left-to-right" evidence="1">
        <dbReference type="Rhea" id="RHEA:71224"/>
    </physiologicalReaction>
</comment>
<comment type="catalytic activity">
    <reaction evidence="1">
        <text>beta-alanine(out) + chloride(out) + 2 Na(+)(out) = beta-alanine(in) + chloride(in) + 2 Na(+)(in)</text>
        <dbReference type="Rhea" id="RHEA:71247"/>
        <dbReference type="ChEBI" id="CHEBI:17996"/>
        <dbReference type="ChEBI" id="CHEBI:29101"/>
        <dbReference type="ChEBI" id="CHEBI:57966"/>
    </reaction>
    <physiologicalReaction direction="left-to-right" evidence="1">
        <dbReference type="Rhea" id="RHEA:71248"/>
    </physiologicalReaction>
</comment>
<comment type="catalytic activity">
    <reaction evidence="1">
        <text>hypotaurine(out) + chloride(out) + 2 Na(+)(out) = hypotaurine(in) + chloride(in) + 2 Na(+)(in)</text>
        <dbReference type="Rhea" id="RHEA:71243"/>
        <dbReference type="ChEBI" id="CHEBI:17996"/>
        <dbReference type="ChEBI" id="CHEBI:29101"/>
        <dbReference type="ChEBI" id="CHEBI:57853"/>
    </reaction>
    <physiologicalReaction direction="left-to-right" evidence="1">
        <dbReference type="Rhea" id="RHEA:71244"/>
    </physiologicalReaction>
</comment>
<comment type="activity regulation">
    <text evidence="4 5">GABA transport is inhibited by beta-alanine.</text>
</comment>
<comment type="biophysicochemical properties">
    <kinetics>
        <KM evidence="4">12 uM for GABA</KM>
        <KM evidence="5">2.3 uM for GABA</KM>
        <Vmax evidence="4">3.0 nmol/min/mg enzyme for GABA</Vmax>
    </kinetics>
</comment>
<comment type="subcellular location">
    <subcellularLocation>
        <location evidence="6">Cell membrane</location>
        <topology evidence="2">Multi-pass membrane protein</topology>
    </subcellularLocation>
</comment>
<comment type="tissue specificity">
    <text evidence="4 5 6">Brain and retina (PubMed:1400419, PubMed:1497897). Expressed predominantly within neurons (PubMed:1497897). Expressed in the hippocampus (at protein level) (PubMed:8731228).</text>
</comment>
<comment type="similarity">
    <text evidence="7">Belongs to the sodium:neurotransmitter symporter (SNF) (TC 2.A.22) family. SLC6A11 subfamily.</text>
</comment>